<accession>P72403</accession>
<reference key="1">
    <citation type="journal article" date="2002" name="Nature">
        <title>Complete genome sequence of the model actinomycete Streptomyces coelicolor A3(2).</title>
        <authorList>
            <person name="Bentley S.D."/>
            <person name="Chater K.F."/>
            <person name="Cerdeno-Tarraga A.-M."/>
            <person name="Challis G.L."/>
            <person name="Thomson N.R."/>
            <person name="James K.D."/>
            <person name="Harris D.E."/>
            <person name="Quail M.A."/>
            <person name="Kieser H."/>
            <person name="Harper D."/>
            <person name="Bateman A."/>
            <person name="Brown S."/>
            <person name="Chandra G."/>
            <person name="Chen C.W."/>
            <person name="Collins M."/>
            <person name="Cronin A."/>
            <person name="Fraser A."/>
            <person name="Goble A."/>
            <person name="Hidalgo J."/>
            <person name="Hornsby T."/>
            <person name="Howarth S."/>
            <person name="Huang C.-H."/>
            <person name="Kieser T."/>
            <person name="Larke L."/>
            <person name="Murphy L.D."/>
            <person name="Oliver K."/>
            <person name="O'Neil S."/>
            <person name="Rabbinowitsch E."/>
            <person name="Rajandream M.A."/>
            <person name="Rutherford K.M."/>
            <person name="Rutter S."/>
            <person name="Seeger K."/>
            <person name="Saunders D."/>
            <person name="Sharp S."/>
            <person name="Squares R."/>
            <person name="Squares S."/>
            <person name="Taylor K."/>
            <person name="Warren T."/>
            <person name="Wietzorrek A."/>
            <person name="Woodward J.R."/>
            <person name="Barrell B.G."/>
            <person name="Parkhill J."/>
            <person name="Hopwood D.A."/>
        </authorList>
    </citation>
    <scope>NUCLEOTIDE SEQUENCE [LARGE SCALE GENOMIC DNA]</scope>
    <source>
        <strain>ATCC BAA-471 / A3(2) / M145</strain>
    </source>
</reference>
<reference key="2">
    <citation type="journal article" date="1996" name="Nucleic Acids Res.">
        <title>Molecular analysis of RNA polymerase alpha subunit gene from Streptomyces coelicolor A3(2).</title>
        <authorList>
            <person name="Cho E.-J."/>
            <person name="Bae J.-B."/>
            <person name="Kang J.-G."/>
            <person name="Roe J.-H."/>
        </authorList>
    </citation>
    <scope>NUCLEOTIDE SEQUENCE [GENOMIC DNA] OF 105-134</scope>
    <source>
        <strain>ATCC BAA-471 / A3(2) / M145</strain>
    </source>
</reference>
<protein>
    <recommendedName>
        <fullName evidence="1">Small ribosomal subunit protein uS11</fullName>
    </recommendedName>
    <alternativeName>
        <fullName evidence="3">30S ribosomal protein S11</fullName>
    </alternativeName>
</protein>
<gene>
    <name evidence="1" type="primary">rpsK</name>
    <name type="ordered locus">SCO4728</name>
    <name type="ORF">SC6G4.06</name>
</gene>
<comment type="function">
    <text evidence="1">Located on the platform of the 30S subunit, it bridges several disparate RNA helices of the 16S rRNA. Forms part of the Shine-Dalgarno cleft in the 70S ribosome.</text>
</comment>
<comment type="subunit">
    <text evidence="1">Part of the 30S ribosomal subunit. Interacts with proteins S7 and S18. Binds to IF-3.</text>
</comment>
<comment type="similarity">
    <text evidence="1">Belongs to the universal ribosomal protein uS11 family.</text>
</comment>
<organism>
    <name type="scientific">Streptomyces coelicolor (strain ATCC BAA-471 / A3(2) / M145)</name>
    <dbReference type="NCBI Taxonomy" id="100226"/>
    <lineage>
        <taxon>Bacteria</taxon>
        <taxon>Bacillati</taxon>
        <taxon>Actinomycetota</taxon>
        <taxon>Actinomycetes</taxon>
        <taxon>Kitasatosporales</taxon>
        <taxon>Streptomycetaceae</taxon>
        <taxon>Streptomyces</taxon>
        <taxon>Streptomyces albidoflavus group</taxon>
    </lineage>
</organism>
<proteinExistence type="inferred from homology"/>
<sequence>MPPKGRQGAAKKVRRKEKKNVAHGHAHIKSTFNNTIVSITDPTGNVISWASAGHVGFKGSRKSTPFAAQMAAESAARRAQEHGMRKVDVFVKGPGSGRETAIRSLQATGLEVGSIQDVTPTPHNGCRPPKRRRV</sequence>
<name>RS11_STRCO</name>
<keyword id="KW-1185">Reference proteome</keyword>
<keyword id="KW-0687">Ribonucleoprotein</keyword>
<keyword id="KW-0689">Ribosomal protein</keyword>
<keyword id="KW-0694">RNA-binding</keyword>
<keyword id="KW-0699">rRNA-binding</keyword>
<dbReference type="EMBL" id="AL939121">
    <property type="protein sequence ID" value="CAA20384.1"/>
    <property type="molecule type" value="Genomic_DNA"/>
</dbReference>
<dbReference type="EMBL" id="X92107">
    <property type="protein sequence ID" value="CAA63079.1"/>
    <property type="molecule type" value="Genomic_DNA"/>
</dbReference>
<dbReference type="PIR" id="T35557">
    <property type="entry name" value="T35557"/>
</dbReference>
<dbReference type="RefSeq" id="NP_628886.1">
    <property type="nucleotide sequence ID" value="NC_003888.3"/>
</dbReference>
<dbReference type="RefSeq" id="WP_003948617.1">
    <property type="nucleotide sequence ID" value="NZ_VNID01000016.1"/>
</dbReference>
<dbReference type="SMR" id="P72403"/>
<dbReference type="FunCoup" id="P72403">
    <property type="interactions" value="397"/>
</dbReference>
<dbReference type="STRING" id="100226.gene:17762377"/>
<dbReference type="PaxDb" id="100226-SCO4728"/>
<dbReference type="GeneID" id="97269549"/>
<dbReference type="KEGG" id="sco:SCO4728"/>
<dbReference type="PATRIC" id="fig|100226.15.peg.4799"/>
<dbReference type="eggNOG" id="COG0100">
    <property type="taxonomic scope" value="Bacteria"/>
</dbReference>
<dbReference type="HOGENOM" id="CLU_072439_5_0_11"/>
<dbReference type="InParanoid" id="P72403"/>
<dbReference type="OrthoDB" id="9806415at2"/>
<dbReference type="PhylomeDB" id="P72403"/>
<dbReference type="PRO" id="PR:P72403"/>
<dbReference type="Proteomes" id="UP000001973">
    <property type="component" value="Chromosome"/>
</dbReference>
<dbReference type="GO" id="GO:0022627">
    <property type="term" value="C:cytosolic small ribosomal subunit"/>
    <property type="evidence" value="ECO:0000318"/>
    <property type="project" value="GO_Central"/>
</dbReference>
<dbReference type="GO" id="GO:0019843">
    <property type="term" value="F:rRNA binding"/>
    <property type="evidence" value="ECO:0007669"/>
    <property type="project" value="UniProtKB-UniRule"/>
</dbReference>
<dbReference type="GO" id="GO:0003735">
    <property type="term" value="F:structural constituent of ribosome"/>
    <property type="evidence" value="ECO:0000318"/>
    <property type="project" value="GO_Central"/>
</dbReference>
<dbReference type="GO" id="GO:0006412">
    <property type="term" value="P:translation"/>
    <property type="evidence" value="ECO:0000318"/>
    <property type="project" value="GO_Central"/>
</dbReference>
<dbReference type="FunFam" id="3.30.420.80:FF:000001">
    <property type="entry name" value="30S ribosomal protein S11"/>
    <property type="match status" value="1"/>
</dbReference>
<dbReference type="Gene3D" id="3.30.420.80">
    <property type="entry name" value="Ribosomal protein S11"/>
    <property type="match status" value="1"/>
</dbReference>
<dbReference type="HAMAP" id="MF_01310">
    <property type="entry name" value="Ribosomal_uS11"/>
    <property type="match status" value="1"/>
</dbReference>
<dbReference type="InterPro" id="IPR001971">
    <property type="entry name" value="Ribosomal_uS11"/>
</dbReference>
<dbReference type="InterPro" id="IPR019981">
    <property type="entry name" value="Ribosomal_uS11_bac-type"/>
</dbReference>
<dbReference type="InterPro" id="IPR018102">
    <property type="entry name" value="Ribosomal_uS11_CS"/>
</dbReference>
<dbReference type="InterPro" id="IPR036967">
    <property type="entry name" value="Ribosomal_uS11_sf"/>
</dbReference>
<dbReference type="NCBIfam" id="NF003698">
    <property type="entry name" value="PRK05309.1"/>
    <property type="match status" value="1"/>
</dbReference>
<dbReference type="NCBIfam" id="TIGR03632">
    <property type="entry name" value="uS11_bact"/>
    <property type="match status" value="1"/>
</dbReference>
<dbReference type="PANTHER" id="PTHR11759">
    <property type="entry name" value="40S RIBOSOMAL PROTEIN S14/30S RIBOSOMAL PROTEIN S11"/>
    <property type="match status" value="1"/>
</dbReference>
<dbReference type="Pfam" id="PF00411">
    <property type="entry name" value="Ribosomal_S11"/>
    <property type="match status" value="1"/>
</dbReference>
<dbReference type="PIRSF" id="PIRSF002131">
    <property type="entry name" value="Ribosomal_S11"/>
    <property type="match status" value="1"/>
</dbReference>
<dbReference type="SUPFAM" id="SSF53137">
    <property type="entry name" value="Translational machinery components"/>
    <property type="match status" value="1"/>
</dbReference>
<dbReference type="PROSITE" id="PS00054">
    <property type="entry name" value="RIBOSOMAL_S11"/>
    <property type="match status" value="1"/>
</dbReference>
<evidence type="ECO:0000255" key="1">
    <source>
        <dbReference type="HAMAP-Rule" id="MF_01310"/>
    </source>
</evidence>
<evidence type="ECO:0000256" key="2">
    <source>
        <dbReference type="SAM" id="MobiDB-lite"/>
    </source>
</evidence>
<evidence type="ECO:0000305" key="3"/>
<feature type="chain" id="PRO_0000123231" description="Small ribosomal subunit protein uS11">
    <location>
        <begin position="1"/>
        <end position="134"/>
    </location>
</feature>
<feature type="region of interest" description="Disordered" evidence="2">
    <location>
        <begin position="1"/>
        <end position="22"/>
    </location>
</feature>
<feature type="region of interest" description="Disordered" evidence="2">
    <location>
        <begin position="114"/>
        <end position="134"/>
    </location>
</feature>
<feature type="compositionally biased region" description="Basic residues" evidence="2">
    <location>
        <begin position="9"/>
        <end position="22"/>
    </location>
</feature>